<keyword id="KW-1003">Cell membrane</keyword>
<keyword id="KW-0444">Lipid biosynthesis</keyword>
<keyword id="KW-0443">Lipid metabolism</keyword>
<keyword id="KW-0460">Magnesium</keyword>
<keyword id="KW-0472">Membrane</keyword>
<keyword id="KW-0479">Metal-binding</keyword>
<keyword id="KW-0594">Phospholipid biosynthesis</keyword>
<keyword id="KW-1208">Phospholipid metabolism</keyword>
<keyword id="KW-1185">Reference proteome</keyword>
<keyword id="KW-0808">Transferase</keyword>
<keyword id="KW-0812">Transmembrane</keyword>
<keyword id="KW-1133">Transmembrane helix</keyword>
<evidence type="ECO:0000250" key="1">
    <source>
        <dbReference type="UniProtKB" id="P9WPG7"/>
    </source>
</evidence>
<evidence type="ECO:0000255" key="2"/>
<evidence type="ECO:0000255" key="3">
    <source>
        <dbReference type="HAMAP-Rule" id="MF_02241"/>
    </source>
</evidence>
<evidence type="ECO:0000269" key="4">
    <source>
    </source>
</evidence>
<evidence type="ECO:0000303" key="5">
    <source>
    </source>
</evidence>
<evidence type="ECO:0000305" key="6"/>
<evidence type="ECO:0000305" key="7">
    <source>
    </source>
</evidence>
<evidence type="ECO:0000312" key="8">
    <source>
        <dbReference type="EMBL" id="BAC74537.1"/>
    </source>
</evidence>
<sequence>MGQPVASRGRAATPTIGKAMLNKYARAFFTRVLTPFAAFLIRRGVSPDTVTLLGTAGVIAGALVFYPRGEFFWGTIVITLFVFSDLVDGNMARQLGRTSRWGAFLDSTLDRVADGAIFGGFALWYAGGGDNNVLCAVSIFCLASGQVVSYTKARGESIGLPVAVNGLVERAERLVISLVAAGFAGLHKFGVPGIQVLLPIALWIVAVGSLVTLIQRVVTVRRESAEADAATAAENASQGSGAAS</sequence>
<organism>
    <name type="scientific">Streptomyces avermitilis (strain ATCC 31267 / DSM 46492 / JCM 5070 / NBRC 14893 / NCIMB 12804 / NRRL 8165 / MA-4680)</name>
    <dbReference type="NCBI Taxonomy" id="227882"/>
    <lineage>
        <taxon>Bacteria</taxon>
        <taxon>Bacillati</taxon>
        <taxon>Actinomycetota</taxon>
        <taxon>Actinomycetes</taxon>
        <taxon>Kitasatosporales</taxon>
        <taxon>Streptomycetaceae</taxon>
        <taxon>Streptomyces</taxon>
    </lineage>
</organism>
<accession>Q827U4</accession>
<proteinExistence type="evidence at protein level"/>
<protein>
    <recommendedName>
        <fullName evidence="5">Phosphatidylinositol phosphate synthase</fullName>
        <shortName evidence="5">PIP synthase</shortName>
        <ecNumber evidence="4">2.7.8.-</ecNumber>
    </recommendedName>
    <alternativeName>
        <fullName>CDP-diacylglycerol--D-myo-inositol-3-phosphate 3-phosphatidyltransferase</fullName>
    </alternativeName>
</protein>
<dbReference type="EC" id="2.7.8.-" evidence="4"/>
<dbReference type="EMBL" id="BA000030">
    <property type="protein sequence ID" value="BAC74537.1"/>
    <property type="molecule type" value="Genomic_DNA"/>
</dbReference>
<dbReference type="SMR" id="Q827U4"/>
<dbReference type="KEGG" id="sma:SAVERM_6826"/>
<dbReference type="eggNOG" id="COG0558">
    <property type="taxonomic scope" value="Bacteria"/>
</dbReference>
<dbReference type="HOGENOM" id="CLU_080384_0_1_11"/>
<dbReference type="OrthoDB" id="116551at2"/>
<dbReference type="UniPathway" id="UPA00220"/>
<dbReference type="Proteomes" id="UP000000428">
    <property type="component" value="Chromosome"/>
</dbReference>
<dbReference type="GO" id="GO:0005886">
    <property type="term" value="C:plasma membrane"/>
    <property type="evidence" value="ECO:0007669"/>
    <property type="project" value="UniProtKB-SubCell"/>
</dbReference>
<dbReference type="GO" id="GO:0000287">
    <property type="term" value="F:magnesium ion binding"/>
    <property type="evidence" value="ECO:0007669"/>
    <property type="project" value="UniProtKB-UniRule"/>
</dbReference>
<dbReference type="GO" id="GO:0016780">
    <property type="term" value="F:phosphotransferase activity, for other substituted phosphate groups"/>
    <property type="evidence" value="ECO:0007669"/>
    <property type="project" value="UniProtKB-UniRule"/>
</dbReference>
<dbReference type="GO" id="GO:0008654">
    <property type="term" value="P:phospholipid biosynthetic process"/>
    <property type="evidence" value="ECO:0007669"/>
    <property type="project" value="UniProtKB-UniRule"/>
</dbReference>
<dbReference type="Gene3D" id="1.20.120.1760">
    <property type="match status" value="1"/>
</dbReference>
<dbReference type="HAMAP" id="MF_02241">
    <property type="entry name" value="PIP_synthase"/>
    <property type="match status" value="1"/>
</dbReference>
<dbReference type="InterPro" id="IPR000462">
    <property type="entry name" value="CDP-OH_P_trans"/>
</dbReference>
<dbReference type="InterPro" id="IPR043130">
    <property type="entry name" value="CDP-OH_PTrfase_TM_dom"/>
</dbReference>
<dbReference type="InterPro" id="IPR048254">
    <property type="entry name" value="CDP_ALCOHOL_P_TRANSF_CS"/>
</dbReference>
<dbReference type="InterPro" id="IPR044268">
    <property type="entry name" value="PIP_synthase_PgsA1"/>
</dbReference>
<dbReference type="NCBIfam" id="NF045883">
    <property type="entry name" value="PIPSynth"/>
    <property type="match status" value="1"/>
</dbReference>
<dbReference type="Pfam" id="PF01066">
    <property type="entry name" value="CDP-OH_P_transf"/>
    <property type="match status" value="1"/>
</dbReference>
<dbReference type="PROSITE" id="PS00379">
    <property type="entry name" value="CDP_ALCOHOL_P_TRANSF"/>
    <property type="match status" value="1"/>
</dbReference>
<gene>
    <name evidence="8" type="primary">pgsA2</name>
    <name evidence="8" type="ordered locus">SAV_6826</name>
    <name evidence="8" type="ORF">SAVERM_6826</name>
</gene>
<reference key="1">
    <citation type="journal article" date="2001" name="Proc. Natl. Acad. Sci. U.S.A.">
        <title>Genome sequence of an industrial microorganism Streptomyces avermitilis: deducing the ability of producing secondary metabolites.</title>
        <authorList>
            <person name="Omura S."/>
            <person name="Ikeda H."/>
            <person name="Ishikawa J."/>
            <person name="Hanamoto A."/>
            <person name="Takahashi C."/>
            <person name="Shinose M."/>
            <person name="Takahashi Y."/>
            <person name="Horikawa H."/>
            <person name="Nakazawa H."/>
            <person name="Osonoe T."/>
            <person name="Kikuchi H."/>
            <person name="Shiba T."/>
            <person name="Sakaki Y."/>
            <person name="Hattori M."/>
        </authorList>
    </citation>
    <scope>NUCLEOTIDE SEQUENCE [LARGE SCALE GENOMIC DNA]</scope>
    <source>
        <strain>ATCC 31267 / DSM 46492 / JCM 5070 / NBRC 14893 / NCIMB 12804 / NRRL 8165 / MA-4680</strain>
    </source>
</reference>
<reference key="2">
    <citation type="journal article" date="2003" name="Nat. Biotechnol.">
        <title>Complete genome sequence and comparative analysis of the industrial microorganism Streptomyces avermitilis.</title>
        <authorList>
            <person name="Ikeda H."/>
            <person name="Ishikawa J."/>
            <person name="Hanamoto A."/>
            <person name="Shinose M."/>
            <person name="Kikuchi H."/>
            <person name="Shiba T."/>
            <person name="Sakaki Y."/>
            <person name="Hattori M."/>
            <person name="Omura S."/>
        </authorList>
    </citation>
    <scope>NUCLEOTIDE SEQUENCE [LARGE SCALE GENOMIC DNA]</scope>
    <source>
        <strain>ATCC 31267 / DSM 46492 / JCM 5070 / NBRC 14893 / NCIMB 12804 / NRRL 8165 / MA-4680</strain>
    </source>
</reference>
<reference key="3">
    <citation type="journal article" date="2014" name="Biochem. Biophys. Res. Commun.">
        <title>Ubiquitous distribution of phosphatidylinositol phosphate synthase and archaetidylinositol phosphate synthase in Bacteria and Archaea, which contain inositol phospholipid.</title>
        <authorList>
            <person name="Morii H."/>
            <person name="Ogawa M."/>
            <person name="Fukuda K."/>
            <person name="Taniguchi H."/>
        </authorList>
    </citation>
    <scope>FUNCTION</scope>
    <scope>CATALYTIC ACTIVITY</scope>
    <scope>PATHWAY</scope>
</reference>
<name>PIPS_STRAW</name>
<comment type="function">
    <text evidence="4">Catalyzes the conjugation of the 1'-hydroxyl group of D-myo-inositol-3-phosphate (also named L-myo-inositol-1-phosphate) with a lipid tail of cytidine diphosphate diacylglycerol (CDP-DAG), forming phosphatidylinositol phosphate (PIP) and CMP. PIP is a precursor of phosphatidylinositol (PI) which is an essential lipid required for cell wall formation.</text>
</comment>
<comment type="catalytic activity">
    <reaction evidence="4">
        <text>a CDP-1,2-diacyl-sn-glycerol + 1D-myo-inositol 3-phosphate = a 1,2-diacyl-sn-glycero-3-phospho-(1D-myo-inositol-3-phosphate) + CMP + H(+)</text>
        <dbReference type="Rhea" id="RHEA:60504"/>
        <dbReference type="ChEBI" id="CHEBI:15378"/>
        <dbReference type="ChEBI" id="CHEBI:58088"/>
        <dbReference type="ChEBI" id="CHEBI:58332"/>
        <dbReference type="ChEBI" id="CHEBI:58401"/>
        <dbReference type="ChEBI" id="CHEBI:60377"/>
    </reaction>
</comment>
<comment type="catalytic activity">
    <reaction evidence="4">
        <text>1,2-di-(9Z-octadecenoyl)-sn-glycero-3-cytidine-5'-diphosphate + 1D-myo-inositol 3-phosphate = 1,2-di-(9Z-octadecenoyl)-sn-glycero-3-phospho-(1D-myo-inositol-3-phosphate) + CMP + H(+)</text>
        <dbReference type="Rhea" id="RHEA:61216"/>
        <dbReference type="ChEBI" id="CHEBI:15378"/>
        <dbReference type="ChEBI" id="CHEBI:58401"/>
        <dbReference type="ChEBI" id="CHEBI:60377"/>
        <dbReference type="ChEBI" id="CHEBI:85356"/>
        <dbReference type="ChEBI" id="CHEBI:144472"/>
    </reaction>
</comment>
<comment type="cofactor">
    <cofactor evidence="1">
        <name>Mg(2+)</name>
        <dbReference type="ChEBI" id="CHEBI:18420"/>
    </cofactor>
    <text evidence="1">Contains a di-nuclear catalytic Mg(2+) center.</text>
</comment>
<comment type="pathway">
    <text evidence="7">Phospholipid metabolism; phosphatidylinositol phosphate biosynthesis.</text>
</comment>
<comment type="subunit">
    <text evidence="1">Homodimer.</text>
</comment>
<comment type="subcellular location">
    <subcellularLocation>
        <location evidence="2">Cell membrane</location>
        <topology evidence="2">Multi-pass membrane protein</topology>
    </subcellularLocation>
</comment>
<comment type="similarity">
    <text evidence="3 6">Belongs to the CDP-alcohol phosphatidyltransferase class-I family.</text>
</comment>
<feature type="chain" id="PRO_0000448362" description="Phosphatidylinositol phosphate synthase">
    <location>
        <begin position="1"/>
        <end position="244"/>
    </location>
</feature>
<feature type="transmembrane region" description="Helical" evidence="2">
    <location>
        <begin position="24"/>
        <end position="42"/>
    </location>
</feature>
<feature type="transmembrane region" description="Helical" evidence="2">
    <location>
        <begin position="49"/>
        <end position="66"/>
    </location>
</feature>
<feature type="transmembrane region" description="Helical" evidence="2">
    <location>
        <begin position="72"/>
        <end position="91"/>
    </location>
</feature>
<feature type="transmembrane region" description="Helical" evidence="2">
    <location>
        <begin position="117"/>
        <end position="137"/>
    </location>
</feature>
<feature type="transmembrane region" description="Helical" evidence="2">
    <location>
        <begin position="174"/>
        <end position="190"/>
    </location>
</feature>
<feature type="transmembrane region" description="Helical" evidence="2">
    <location>
        <begin position="196"/>
        <end position="214"/>
    </location>
</feature>
<feature type="active site" description="Proton acceptor" evidence="1">
    <location>
        <position position="110"/>
    </location>
</feature>
<feature type="binding site" evidence="1">
    <location>
        <begin position="48"/>
        <end position="51"/>
    </location>
    <ligand>
        <name>a CDP-1,2-diacyl-sn-glycerol</name>
        <dbReference type="ChEBI" id="CHEBI:58332"/>
    </ligand>
</feature>
<feature type="binding site" evidence="1">
    <location>
        <position position="85"/>
    </location>
    <ligand>
        <name>Mg(2+)</name>
        <dbReference type="ChEBI" id="CHEBI:18420"/>
        <label>1</label>
    </ligand>
</feature>
<feature type="binding site" evidence="1">
    <location>
        <position position="85"/>
    </location>
    <ligand>
        <name>Mg(2+)</name>
        <dbReference type="ChEBI" id="CHEBI:18420"/>
        <label>2</label>
    </ligand>
</feature>
<feature type="binding site" evidence="1">
    <location>
        <position position="88"/>
    </location>
    <ligand>
        <name>Mg(2+)</name>
        <dbReference type="ChEBI" id="CHEBI:18420"/>
        <label>1</label>
    </ligand>
</feature>
<feature type="binding site" evidence="1">
    <location>
        <position position="89"/>
    </location>
    <ligand>
        <name>a CDP-1,2-diacyl-sn-glycerol</name>
        <dbReference type="ChEBI" id="CHEBI:58332"/>
    </ligand>
</feature>
<feature type="binding site" evidence="1">
    <location>
        <position position="93"/>
    </location>
    <ligand>
        <name>a CDP-1,2-diacyl-sn-glycerol</name>
        <dbReference type="ChEBI" id="CHEBI:58332"/>
    </ligand>
</feature>
<feature type="binding site" evidence="1">
    <location>
        <position position="99"/>
    </location>
    <ligand>
        <name>a CDP-1,2-diacyl-sn-glycerol</name>
        <dbReference type="ChEBI" id="CHEBI:58332"/>
    </ligand>
</feature>
<feature type="binding site" evidence="1">
    <location>
        <position position="106"/>
    </location>
    <ligand>
        <name>Mg(2+)</name>
        <dbReference type="ChEBI" id="CHEBI:18420"/>
        <label>1</label>
    </ligand>
</feature>
<feature type="binding site" evidence="1">
    <location>
        <position position="106"/>
    </location>
    <ligand>
        <name>Mg(2+)</name>
        <dbReference type="ChEBI" id="CHEBI:18420"/>
        <label>2</label>
    </ligand>
</feature>
<feature type="binding site" evidence="1">
    <location>
        <position position="110"/>
    </location>
    <ligand>
        <name>Mg(2+)</name>
        <dbReference type="ChEBI" id="CHEBI:18420"/>
        <label>2</label>
    </ligand>
</feature>